<feature type="chain" id="PRO_0000095401" description="Tyrosine recombinase XerD">
    <location>
        <begin position="1"/>
        <end position="291"/>
    </location>
</feature>
<feature type="domain" description="Core-binding (CB)" evidence="3">
    <location>
        <begin position="1"/>
        <end position="82"/>
    </location>
</feature>
<feature type="domain" description="Tyr recombinase" evidence="2">
    <location>
        <begin position="103"/>
        <end position="285"/>
    </location>
</feature>
<feature type="active site" evidence="1">
    <location>
        <position position="143"/>
    </location>
</feature>
<feature type="active site" evidence="1">
    <location>
        <position position="167"/>
    </location>
</feature>
<feature type="active site" evidence="1">
    <location>
        <position position="237"/>
    </location>
</feature>
<feature type="active site" evidence="1">
    <location>
        <position position="240"/>
    </location>
</feature>
<feature type="active site" evidence="1">
    <location>
        <position position="263"/>
    </location>
</feature>
<feature type="active site" description="O-(3'-phospho-DNA)-tyrosine intermediate" evidence="1">
    <location>
        <position position="272"/>
    </location>
</feature>
<organism>
    <name type="scientific">Neisseria meningitidis serogroup B (strain ATCC BAA-335 / MC58)</name>
    <dbReference type="NCBI Taxonomy" id="122586"/>
    <lineage>
        <taxon>Bacteria</taxon>
        <taxon>Pseudomonadati</taxon>
        <taxon>Pseudomonadota</taxon>
        <taxon>Betaproteobacteria</taxon>
        <taxon>Neisseriales</taxon>
        <taxon>Neisseriaceae</taxon>
        <taxon>Neisseria</taxon>
    </lineage>
</organism>
<comment type="function">
    <text evidence="1">Site-specific tyrosine recombinase, which acts by catalyzing the cutting and rejoining of the recombining DNA molecules. The XerC-XerD complex is essential to convert dimers of the bacterial chromosome into monomers to permit their segregation at cell division. It also contributes to the segregational stability of plasmids.</text>
</comment>
<comment type="subunit">
    <text evidence="1">Forms a cyclic heterotetrameric complex composed of two molecules of XerC and two molecules of XerD.</text>
</comment>
<comment type="subcellular location">
    <subcellularLocation>
        <location evidence="1">Cytoplasm</location>
    </subcellularLocation>
</comment>
<comment type="similarity">
    <text evidence="1">Belongs to the 'phage' integrase family. XerD subfamily.</text>
</comment>
<sequence>MEEGLIDRLLETLWLDRRLSQNTLNGYRRDLEKIARRLSQSGRMLKDADEADLAAAVYVDGEQRSSQARALSACKRLYIWMEREGIRTDNPTRLLKPPKIDKNIPTLITEQQISRLLAAPDTDTPHGLRDKALLELMYATGLRVSEAVGLNFGNVDLDRGCITALGKGDKQRMVPMGQESAYWVERYYTEARPLLLKGRNCDALFVSQKKTGISRQLAWMIVKEYASQAGIGHISPHSLRHAFATHLVRHGLDLRVVQDMLGHADLNTTQIYTHVANVWLQGVVKEHHSRN</sequence>
<protein>
    <recommendedName>
        <fullName evidence="1">Tyrosine recombinase XerD</fullName>
    </recommendedName>
</protein>
<keyword id="KW-0131">Cell cycle</keyword>
<keyword id="KW-0132">Cell division</keyword>
<keyword id="KW-0159">Chromosome partition</keyword>
<keyword id="KW-0963">Cytoplasm</keyword>
<keyword id="KW-0229">DNA integration</keyword>
<keyword id="KW-0233">DNA recombination</keyword>
<keyword id="KW-0238">DNA-binding</keyword>
<keyword id="KW-1185">Reference proteome</keyword>
<proteinExistence type="inferred from homology"/>
<dbReference type="EMBL" id="AE002098">
    <property type="protein sequence ID" value="AAF41164.1"/>
    <property type="molecule type" value="Genomic_DNA"/>
</dbReference>
<dbReference type="PIR" id="F81163">
    <property type="entry name" value="F81163"/>
</dbReference>
<dbReference type="RefSeq" id="NP_273793.1">
    <property type="nucleotide sequence ID" value="NC_003112.2"/>
</dbReference>
<dbReference type="RefSeq" id="WP_002222739.1">
    <property type="nucleotide sequence ID" value="NC_003112.2"/>
</dbReference>
<dbReference type="SMR" id="Q9K068"/>
<dbReference type="FunCoup" id="Q9K068">
    <property type="interactions" value="161"/>
</dbReference>
<dbReference type="STRING" id="122586.NMB0751"/>
<dbReference type="PaxDb" id="122586-NMB0751"/>
<dbReference type="KEGG" id="nme:NMB0751"/>
<dbReference type="PATRIC" id="fig|122586.8.peg.955"/>
<dbReference type="HOGENOM" id="CLU_027562_9_0_4"/>
<dbReference type="InParanoid" id="Q9K068"/>
<dbReference type="OrthoDB" id="9801717at2"/>
<dbReference type="Proteomes" id="UP000000425">
    <property type="component" value="Chromosome"/>
</dbReference>
<dbReference type="GO" id="GO:0005737">
    <property type="term" value="C:cytoplasm"/>
    <property type="evidence" value="ECO:0007669"/>
    <property type="project" value="UniProtKB-SubCell"/>
</dbReference>
<dbReference type="GO" id="GO:0048476">
    <property type="term" value="C:Holliday junction resolvase complex"/>
    <property type="evidence" value="ECO:0000318"/>
    <property type="project" value="GO_Central"/>
</dbReference>
<dbReference type="GO" id="GO:0003677">
    <property type="term" value="F:DNA binding"/>
    <property type="evidence" value="ECO:0000318"/>
    <property type="project" value="GO_Central"/>
</dbReference>
<dbReference type="GO" id="GO:0009037">
    <property type="term" value="F:tyrosine-based site-specific recombinase activity"/>
    <property type="evidence" value="ECO:0000318"/>
    <property type="project" value="GO_Central"/>
</dbReference>
<dbReference type="GO" id="GO:0051301">
    <property type="term" value="P:cell division"/>
    <property type="evidence" value="ECO:0007669"/>
    <property type="project" value="UniProtKB-KW"/>
</dbReference>
<dbReference type="GO" id="GO:0007059">
    <property type="term" value="P:chromosome segregation"/>
    <property type="evidence" value="ECO:0000318"/>
    <property type="project" value="GO_Central"/>
</dbReference>
<dbReference type="GO" id="GO:0006310">
    <property type="term" value="P:DNA recombination"/>
    <property type="evidence" value="ECO:0000318"/>
    <property type="project" value="GO_Central"/>
</dbReference>
<dbReference type="GO" id="GO:0006313">
    <property type="term" value="P:DNA transposition"/>
    <property type="evidence" value="ECO:0007669"/>
    <property type="project" value="UniProtKB-UniRule"/>
</dbReference>
<dbReference type="GO" id="GO:0071139">
    <property type="term" value="P:resolution of DNA recombination intermediates"/>
    <property type="evidence" value="ECO:0000318"/>
    <property type="project" value="GO_Central"/>
</dbReference>
<dbReference type="CDD" id="cd00798">
    <property type="entry name" value="INT_XerDC_C"/>
    <property type="match status" value="1"/>
</dbReference>
<dbReference type="Gene3D" id="1.10.150.130">
    <property type="match status" value="1"/>
</dbReference>
<dbReference type="Gene3D" id="1.10.443.10">
    <property type="entry name" value="Intergrase catalytic core"/>
    <property type="match status" value="1"/>
</dbReference>
<dbReference type="HAMAP" id="MF_01808">
    <property type="entry name" value="Recomb_XerC_XerD"/>
    <property type="match status" value="1"/>
</dbReference>
<dbReference type="HAMAP" id="MF_01807">
    <property type="entry name" value="Recomb_XerD"/>
    <property type="match status" value="1"/>
</dbReference>
<dbReference type="InterPro" id="IPR044068">
    <property type="entry name" value="CB"/>
</dbReference>
<dbReference type="InterPro" id="IPR011010">
    <property type="entry name" value="DNA_brk_join_enz"/>
</dbReference>
<dbReference type="InterPro" id="IPR013762">
    <property type="entry name" value="Integrase-like_cat_sf"/>
</dbReference>
<dbReference type="InterPro" id="IPR002104">
    <property type="entry name" value="Integrase_catalytic"/>
</dbReference>
<dbReference type="InterPro" id="IPR010998">
    <property type="entry name" value="Integrase_recombinase_N"/>
</dbReference>
<dbReference type="InterPro" id="IPR004107">
    <property type="entry name" value="Integrase_SAM-like_N"/>
</dbReference>
<dbReference type="InterPro" id="IPR011932">
    <property type="entry name" value="Recomb_XerD"/>
</dbReference>
<dbReference type="InterPro" id="IPR023009">
    <property type="entry name" value="Tyrosine_recombinase_XerC/XerD"/>
</dbReference>
<dbReference type="InterPro" id="IPR050090">
    <property type="entry name" value="Tyrosine_recombinase_XerCD"/>
</dbReference>
<dbReference type="NCBIfam" id="NF001399">
    <property type="entry name" value="PRK00283.1"/>
    <property type="match status" value="1"/>
</dbReference>
<dbReference type="NCBIfam" id="TIGR02225">
    <property type="entry name" value="recomb_XerD"/>
    <property type="match status" value="1"/>
</dbReference>
<dbReference type="PANTHER" id="PTHR30349">
    <property type="entry name" value="PHAGE INTEGRASE-RELATED"/>
    <property type="match status" value="1"/>
</dbReference>
<dbReference type="PANTHER" id="PTHR30349:SF90">
    <property type="entry name" value="TYROSINE RECOMBINASE XERD"/>
    <property type="match status" value="1"/>
</dbReference>
<dbReference type="Pfam" id="PF02899">
    <property type="entry name" value="Phage_int_SAM_1"/>
    <property type="match status" value="1"/>
</dbReference>
<dbReference type="Pfam" id="PF00589">
    <property type="entry name" value="Phage_integrase"/>
    <property type="match status" value="1"/>
</dbReference>
<dbReference type="SUPFAM" id="SSF56349">
    <property type="entry name" value="DNA breaking-rejoining enzymes"/>
    <property type="match status" value="1"/>
</dbReference>
<dbReference type="SUPFAM" id="SSF47823">
    <property type="entry name" value="lambda integrase-like, N-terminal domain"/>
    <property type="match status" value="1"/>
</dbReference>
<dbReference type="PROSITE" id="PS51900">
    <property type="entry name" value="CB"/>
    <property type="match status" value="1"/>
</dbReference>
<dbReference type="PROSITE" id="PS51898">
    <property type="entry name" value="TYR_RECOMBINASE"/>
    <property type="match status" value="1"/>
</dbReference>
<evidence type="ECO:0000255" key="1">
    <source>
        <dbReference type="HAMAP-Rule" id="MF_01807"/>
    </source>
</evidence>
<evidence type="ECO:0000255" key="2">
    <source>
        <dbReference type="PROSITE-ProRule" id="PRU01246"/>
    </source>
</evidence>
<evidence type="ECO:0000255" key="3">
    <source>
        <dbReference type="PROSITE-ProRule" id="PRU01248"/>
    </source>
</evidence>
<gene>
    <name evidence="1" type="primary">xerD</name>
    <name type="ordered locus">NMB0751</name>
</gene>
<accession>Q9K068</accession>
<reference key="1">
    <citation type="journal article" date="2000" name="Science">
        <title>Complete genome sequence of Neisseria meningitidis serogroup B strain MC58.</title>
        <authorList>
            <person name="Tettelin H."/>
            <person name="Saunders N.J."/>
            <person name="Heidelberg J.F."/>
            <person name="Jeffries A.C."/>
            <person name="Nelson K.E."/>
            <person name="Eisen J.A."/>
            <person name="Ketchum K.A."/>
            <person name="Hood D.W."/>
            <person name="Peden J.F."/>
            <person name="Dodson R.J."/>
            <person name="Nelson W.C."/>
            <person name="Gwinn M.L."/>
            <person name="DeBoy R.T."/>
            <person name="Peterson J.D."/>
            <person name="Hickey E.K."/>
            <person name="Haft D.H."/>
            <person name="Salzberg S.L."/>
            <person name="White O."/>
            <person name="Fleischmann R.D."/>
            <person name="Dougherty B.A."/>
            <person name="Mason T.M."/>
            <person name="Ciecko A."/>
            <person name="Parksey D.S."/>
            <person name="Blair E."/>
            <person name="Cittone H."/>
            <person name="Clark E.B."/>
            <person name="Cotton M.D."/>
            <person name="Utterback T.R."/>
            <person name="Khouri H.M."/>
            <person name="Qin H."/>
            <person name="Vamathevan J.J."/>
            <person name="Gill J."/>
            <person name="Scarlato V."/>
            <person name="Masignani V."/>
            <person name="Pizza M."/>
            <person name="Grandi G."/>
            <person name="Sun L."/>
            <person name="Smith H.O."/>
            <person name="Fraser C.M."/>
            <person name="Moxon E.R."/>
            <person name="Rappuoli R."/>
            <person name="Venter J.C."/>
        </authorList>
    </citation>
    <scope>NUCLEOTIDE SEQUENCE [LARGE SCALE GENOMIC DNA]</scope>
    <source>
        <strain>ATCC BAA-335 / MC58</strain>
    </source>
</reference>
<name>XERD_NEIMB</name>